<protein>
    <recommendedName>
        <fullName>Phosphopantetheine adenylyltransferase 2</fullName>
        <ecNumber>2.7.7.3</ecNumber>
    </recommendedName>
    <alternativeName>
        <fullName>Dephospho-CoA pyrophosphorylase 2</fullName>
    </alternativeName>
    <alternativeName>
        <fullName>Pantetheine-phosphate adenylyltransferase 2</fullName>
    </alternativeName>
</protein>
<keyword id="KW-0067">ATP-binding</keyword>
<keyword id="KW-0173">Coenzyme A biosynthesis</keyword>
<keyword id="KW-0547">Nucleotide-binding</keyword>
<keyword id="KW-0548">Nucleotidyltransferase</keyword>
<keyword id="KW-1185">Reference proteome</keyword>
<keyword id="KW-0808">Transferase</keyword>
<sequence>MVVLVEASPRGGAGDHPASCELDAGGDVGSGGRQYAAVVVGGTFDRLHQGHHLFLKAAAEFARERIVIGICDGPMLAKKQASRMYAYLIQPIEKRMENVKEYIKAMIASYHFQSIKPDLEVHVEPIVDPFGPSIVDEALEAIIVSKETLPGGLAVNRKRAERGLAQLEIEVVELVPEKSTGNKISSTAFRKKEAERELHKQQQEAPHEQAVELECRI</sequence>
<feature type="chain" id="PRO_0000429412" description="Phosphopantetheine adenylyltransferase 2">
    <location>
        <begin position="1"/>
        <end position="217"/>
    </location>
</feature>
<organism>
    <name type="scientific">Oryza sativa subsp. japonica</name>
    <name type="common">Rice</name>
    <dbReference type="NCBI Taxonomy" id="39947"/>
    <lineage>
        <taxon>Eukaryota</taxon>
        <taxon>Viridiplantae</taxon>
        <taxon>Streptophyta</taxon>
        <taxon>Embryophyta</taxon>
        <taxon>Tracheophyta</taxon>
        <taxon>Spermatophyta</taxon>
        <taxon>Magnoliopsida</taxon>
        <taxon>Liliopsida</taxon>
        <taxon>Poales</taxon>
        <taxon>Poaceae</taxon>
        <taxon>BOP clade</taxon>
        <taxon>Oryzoideae</taxon>
        <taxon>Oryzeae</taxon>
        <taxon>Oryzinae</taxon>
        <taxon>Oryza</taxon>
        <taxon>Oryza sativa</taxon>
    </lineage>
</organism>
<proteinExistence type="inferred from homology"/>
<dbReference type="EC" id="2.7.7.3"/>
<dbReference type="EMBL" id="AP004997">
    <property type="status" value="NOT_ANNOTATED_CDS"/>
    <property type="molecule type" value="Genomic_DNA"/>
</dbReference>
<dbReference type="EMBL" id="AP008208">
    <property type="protein sequence ID" value="BAH91518.1"/>
    <property type="status" value="ALT_SEQ"/>
    <property type="molecule type" value="Genomic_DNA"/>
</dbReference>
<dbReference type="EMBL" id="AP014958">
    <property type="status" value="NOT_ANNOTATED_CDS"/>
    <property type="molecule type" value="Genomic_DNA"/>
</dbReference>
<dbReference type="EMBL" id="CM000139">
    <property type="protein sequence ID" value="EEE56255.1"/>
    <property type="molecule type" value="Genomic_DNA"/>
</dbReference>
<dbReference type="SMR" id="B9F2L1"/>
<dbReference type="FunCoup" id="B9F2L1">
    <property type="interactions" value="25"/>
</dbReference>
<dbReference type="STRING" id="39947.B9F2L1"/>
<dbReference type="PaxDb" id="39947-B9F2L1"/>
<dbReference type="KEGG" id="dosa:Os02g0134000"/>
<dbReference type="eggNOG" id="KOG3351">
    <property type="taxonomic scope" value="Eukaryota"/>
</dbReference>
<dbReference type="HOGENOM" id="CLU_150334_0_0_1"/>
<dbReference type="InParanoid" id="B9F2L1"/>
<dbReference type="UniPathway" id="UPA00241">
    <property type="reaction ID" value="UER00355"/>
</dbReference>
<dbReference type="Proteomes" id="UP000000763">
    <property type="component" value="Chromosome 2"/>
</dbReference>
<dbReference type="Proteomes" id="UP000007752">
    <property type="component" value="Chromosome 2"/>
</dbReference>
<dbReference type="Proteomes" id="UP000059680">
    <property type="component" value="Chromosome 2"/>
</dbReference>
<dbReference type="GO" id="GO:0005524">
    <property type="term" value="F:ATP binding"/>
    <property type="evidence" value="ECO:0007669"/>
    <property type="project" value="UniProtKB-KW"/>
</dbReference>
<dbReference type="GO" id="GO:0004140">
    <property type="term" value="F:dephospho-CoA kinase activity"/>
    <property type="evidence" value="ECO:0000318"/>
    <property type="project" value="GO_Central"/>
</dbReference>
<dbReference type="GO" id="GO:0004595">
    <property type="term" value="F:pantetheine-phosphate adenylyltransferase activity"/>
    <property type="evidence" value="ECO:0000318"/>
    <property type="project" value="GO_Central"/>
</dbReference>
<dbReference type="GO" id="GO:0015937">
    <property type="term" value="P:coenzyme A biosynthetic process"/>
    <property type="evidence" value="ECO:0000318"/>
    <property type="project" value="GO_Central"/>
</dbReference>
<dbReference type="CDD" id="cd02164">
    <property type="entry name" value="PPAT_CoAS"/>
    <property type="match status" value="1"/>
</dbReference>
<dbReference type="FunFam" id="3.40.50.620:FF:000156">
    <property type="entry name" value="Phosphopantetheine adenylyltransferase 1-like"/>
    <property type="match status" value="1"/>
</dbReference>
<dbReference type="Gene3D" id="3.40.50.620">
    <property type="entry name" value="HUPs"/>
    <property type="match status" value="1"/>
</dbReference>
<dbReference type="InterPro" id="IPR004821">
    <property type="entry name" value="Cyt_trans-like"/>
</dbReference>
<dbReference type="InterPro" id="IPR014729">
    <property type="entry name" value="Rossmann-like_a/b/a_fold"/>
</dbReference>
<dbReference type="NCBIfam" id="TIGR00125">
    <property type="entry name" value="cyt_tran_rel"/>
    <property type="match status" value="1"/>
</dbReference>
<dbReference type="NCBIfam" id="NF001985">
    <property type="entry name" value="PRK00777.1"/>
    <property type="match status" value="1"/>
</dbReference>
<dbReference type="PANTHER" id="PTHR10695:SF46">
    <property type="entry name" value="BIFUNCTIONAL COENZYME A SYNTHASE-RELATED"/>
    <property type="match status" value="1"/>
</dbReference>
<dbReference type="PANTHER" id="PTHR10695">
    <property type="entry name" value="DEPHOSPHO-COA KINASE-RELATED"/>
    <property type="match status" value="1"/>
</dbReference>
<dbReference type="Pfam" id="PF01467">
    <property type="entry name" value="CTP_transf_like"/>
    <property type="match status" value="1"/>
</dbReference>
<dbReference type="SUPFAM" id="SSF52374">
    <property type="entry name" value="Nucleotidylyl transferase"/>
    <property type="match status" value="1"/>
</dbReference>
<comment type="function">
    <text evidence="1">Reversibly transfers an adenylyl group from ATP to 4'-phosphopantetheine, yielding dephospho-CoA (dPCoA) and pyrophosphate. Does not accept 4'-phosphopantothenoylcysteine as a substrate (By similarity).</text>
</comment>
<comment type="catalytic activity">
    <reaction>
        <text>(R)-4'-phosphopantetheine + ATP + H(+) = 3'-dephospho-CoA + diphosphate</text>
        <dbReference type="Rhea" id="RHEA:19801"/>
        <dbReference type="ChEBI" id="CHEBI:15378"/>
        <dbReference type="ChEBI" id="CHEBI:30616"/>
        <dbReference type="ChEBI" id="CHEBI:33019"/>
        <dbReference type="ChEBI" id="CHEBI:57328"/>
        <dbReference type="ChEBI" id="CHEBI:61723"/>
        <dbReference type="EC" id="2.7.7.3"/>
    </reaction>
</comment>
<comment type="activity regulation">
    <text evidence="1">Inhibited by CoA.</text>
</comment>
<comment type="pathway">
    <text>Cofactor biosynthesis; coenzyme A biosynthesis; CoA from (R)-pantothenate: step 4/5.</text>
</comment>
<comment type="similarity">
    <text evidence="2">Belongs to the eukaryotic CoaD family.</text>
</comment>
<comment type="sequence caution" evidence="2">
    <conflict type="erroneous gene model prediction">
        <sequence resource="EMBL-CDS" id="BAH91518"/>
    </conflict>
</comment>
<gene>
    <name type="ordered locus">Os02g0134000</name>
    <name type="ordered locus">LOC_Os02g04120</name>
    <name type="ORF">OsJ_05277</name>
    <name type="ORF">P0030G11</name>
</gene>
<reference key="1">
    <citation type="journal article" date="2005" name="Nature">
        <title>The map-based sequence of the rice genome.</title>
        <authorList>
            <consortium name="International rice genome sequencing project (IRGSP)"/>
        </authorList>
    </citation>
    <scope>NUCLEOTIDE SEQUENCE [LARGE SCALE GENOMIC DNA]</scope>
    <source>
        <strain>cv. Nipponbare</strain>
    </source>
</reference>
<reference key="2">
    <citation type="journal article" date="2008" name="Nucleic Acids Res.">
        <title>The rice annotation project database (RAP-DB): 2008 update.</title>
        <authorList>
            <consortium name="The rice annotation project (RAP)"/>
        </authorList>
    </citation>
    <scope>GENOME REANNOTATION</scope>
    <source>
        <strain>cv. Nipponbare</strain>
    </source>
</reference>
<reference key="3">
    <citation type="journal article" date="2013" name="Rice">
        <title>Improvement of the Oryza sativa Nipponbare reference genome using next generation sequence and optical map data.</title>
        <authorList>
            <person name="Kawahara Y."/>
            <person name="de la Bastide M."/>
            <person name="Hamilton J.P."/>
            <person name="Kanamori H."/>
            <person name="McCombie W.R."/>
            <person name="Ouyang S."/>
            <person name="Schwartz D.C."/>
            <person name="Tanaka T."/>
            <person name="Wu J."/>
            <person name="Zhou S."/>
            <person name="Childs K.L."/>
            <person name="Davidson R.M."/>
            <person name="Lin H."/>
            <person name="Quesada-Ocampo L."/>
            <person name="Vaillancourt B."/>
            <person name="Sakai H."/>
            <person name="Lee S.S."/>
            <person name="Kim J."/>
            <person name="Numa H."/>
            <person name="Itoh T."/>
            <person name="Buell C.R."/>
            <person name="Matsumoto T."/>
        </authorList>
    </citation>
    <scope>GENOME REANNOTATION</scope>
    <source>
        <strain>cv. Nipponbare</strain>
    </source>
</reference>
<reference key="4">
    <citation type="journal article" date="2005" name="PLoS Biol.">
        <title>The genomes of Oryza sativa: a history of duplications.</title>
        <authorList>
            <person name="Yu J."/>
            <person name="Wang J."/>
            <person name="Lin W."/>
            <person name="Li S."/>
            <person name="Li H."/>
            <person name="Zhou J."/>
            <person name="Ni P."/>
            <person name="Dong W."/>
            <person name="Hu S."/>
            <person name="Zeng C."/>
            <person name="Zhang J."/>
            <person name="Zhang Y."/>
            <person name="Li R."/>
            <person name="Xu Z."/>
            <person name="Li S."/>
            <person name="Li X."/>
            <person name="Zheng H."/>
            <person name="Cong L."/>
            <person name="Lin L."/>
            <person name="Yin J."/>
            <person name="Geng J."/>
            <person name="Li G."/>
            <person name="Shi J."/>
            <person name="Liu J."/>
            <person name="Lv H."/>
            <person name="Li J."/>
            <person name="Wang J."/>
            <person name="Deng Y."/>
            <person name="Ran L."/>
            <person name="Shi X."/>
            <person name="Wang X."/>
            <person name="Wu Q."/>
            <person name="Li C."/>
            <person name="Ren X."/>
            <person name="Wang J."/>
            <person name="Wang X."/>
            <person name="Li D."/>
            <person name="Liu D."/>
            <person name="Zhang X."/>
            <person name="Ji Z."/>
            <person name="Zhao W."/>
            <person name="Sun Y."/>
            <person name="Zhang Z."/>
            <person name="Bao J."/>
            <person name="Han Y."/>
            <person name="Dong L."/>
            <person name="Ji J."/>
            <person name="Chen P."/>
            <person name="Wu S."/>
            <person name="Liu J."/>
            <person name="Xiao Y."/>
            <person name="Bu D."/>
            <person name="Tan J."/>
            <person name="Yang L."/>
            <person name="Ye C."/>
            <person name="Zhang J."/>
            <person name="Xu J."/>
            <person name="Zhou Y."/>
            <person name="Yu Y."/>
            <person name="Zhang B."/>
            <person name="Zhuang S."/>
            <person name="Wei H."/>
            <person name="Liu B."/>
            <person name="Lei M."/>
            <person name="Yu H."/>
            <person name="Li Y."/>
            <person name="Xu H."/>
            <person name="Wei S."/>
            <person name="He X."/>
            <person name="Fang L."/>
            <person name="Zhang Z."/>
            <person name="Zhang Y."/>
            <person name="Huang X."/>
            <person name="Su Z."/>
            <person name="Tong W."/>
            <person name="Li J."/>
            <person name="Tong Z."/>
            <person name="Li S."/>
            <person name="Ye J."/>
            <person name="Wang L."/>
            <person name="Fang L."/>
            <person name="Lei T."/>
            <person name="Chen C.-S."/>
            <person name="Chen H.-C."/>
            <person name="Xu Z."/>
            <person name="Li H."/>
            <person name="Huang H."/>
            <person name="Zhang F."/>
            <person name="Xu H."/>
            <person name="Li N."/>
            <person name="Zhao C."/>
            <person name="Li S."/>
            <person name="Dong L."/>
            <person name="Huang Y."/>
            <person name="Li L."/>
            <person name="Xi Y."/>
            <person name="Qi Q."/>
            <person name="Li W."/>
            <person name="Zhang B."/>
            <person name="Hu W."/>
            <person name="Zhang Y."/>
            <person name="Tian X."/>
            <person name="Jiao Y."/>
            <person name="Liang X."/>
            <person name="Jin J."/>
            <person name="Gao L."/>
            <person name="Zheng W."/>
            <person name="Hao B."/>
            <person name="Liu S.-M."/>
            <person name="Wang W."/>
            <person name="Yuan L."/>
            <person name="Cao M."/>
            <person name="McDermott J."/>
            <person name="Samudrala R."/>
            <person name="Wang J."/>
            <person name="Wong G.K.-S."/>
            <person name="Yang H."/>
        </authorList>
    </citation>
    <scope>NUCLEOTIDE SEQUENCE [LARGE SCALE GENOMIC DNA]</scope>
    <source>
        <strain>cv. Nipponbare</strain>
    </source>
</reference>
<evidence type="ECO:0000250" key="1"/>
<evidence type="ECO:0000305" key="2"/>
<accession>B9F2L1</accession>
<accession>C7IZ72</accession>
<name>COAD2_ORYSJ</name>